<keyword id="KW-0156">Chromatin regulator</keyword>
<keyword id="KW-0539">Nucleus</keyword>
<keyword id="KW-1185">Reference proteome</keyword>
<keyword id="KW-0677">Repeat</keyword>
<keyword id="KW-0678">Repressor</keyword>
<keyword id="KW-0804">Transcription</keyword>
<keyword id="KW-0805">Transcription regulation</keyword>
<keyword id="KW-0853">WD repeat</keyword>
<sequence>MHLIKPSWLSHSGEQKDFEVYSCHVSPDGKRLATAGGDGHVRVWSVEAIFNSHDRNYTKPRQLCHMSHHLGTIHSVRFSPNGRYLASGADDKIICIYHLDSNPPSHTSTFGTNEPPPVENWKTYKRLVGHDNDVQDLAWSPDNSLLVSVGLDSKIVVWSGHTFEKLKTLAVHQSHVKGITFDPANKFFATASDDRTIKIFRYTAPAPNATQHDMVNNFILETSISVPFKHSPLTTYFRRCSWSPDGNHIAAANAVNGPVSSIAIIERTGWDSEINLIGHEAPTEVCMFSPRLFYTQKPDENSNANGAASPGLVTVIASAGQDKTLTIWNTNTSRPVLIVQDIASKSVSDLAWTPDGQTVFAASLDGGVIAAQFETGELGWVAKSEENDKALQKYGGSRKGMGTAEDVDGLHLENHSKEKELRGAESRMGALMGDPGPAQKETATTTNGVKPAGKAADTNGTTTPAPPEKPEEESADKTAERIAELKSRVTITKDGKKRVAPLLVSSSGTGLSSLPQAQLVGASSTKPVQNDNPQTILDLSKPYDGLPRGGIAAMLLGNKRKAVIVEDEEEEEPSAKRSATGPVPIVVNGVEGLEPAPLSAPAHGLVPTPEFLRPAVISPNIAYSQVRLAVPKIRSHILRPLERGVLQEETSLEDATKVPENIVLEAKNPAHIREPARITATKRGALLWQDFLPRAIILVAGSKHFWAAACEDGTLHTWSPAGRRLMNAIMLESQPVILEARDSWLLCVTAVGLCHVYNIKTMSSPHPPVSLAPILDVAMTSLSPHGATPAPGVTSAHLNSSGVIVVTLSNGDGFYYSTSLYAWQRLSESWWAVGSQYWNSNDSSVSALQTTAVGPVSGAKNGEGETNVSAGIIPYLERHTTTEFLLKGRAYTLQRLVKALLARDGFENFESSVSIAHLENRIAGAFALGAREEFRLYLFMYAKRIGAENQKTKVEELLNSLIGGVLRDADDGEGWFSKQDKLCGWDRKDLLQGVVLILGKFRDLHRLTVQYARILDMTLGDEEKETTDEGMEVED</sequence>
<comment type="function">
    <text evidence="1">Required for replication-independent chromatin assembly and for the periodic repression of histone gene transcription during the cell cycle.</text>
</comment>
<comment type="subcellular location">
    <subcellularLocation>
        <location evidence="1">Nucleus</location>
    </subcellularLocation>
</comment>
<comment type="similarity">
    <text evidence="3">Belongs to the WD repeat HIR1 family.</text>
</comment>
<comment type="sequence caution" evidence="3">
    <conflict type="erroneous gene model prediction">
        <sequence resource="EMBL-CDS" id="CAE85596"/>
    </conflict>
</comment>
<organism>
    <name type="scientific">Neurospora crassa (strain ATCC 24698 / 74-OR23-1A / CBS 708.71 / DSM 1257 / FGSC 987)</name>
    <dbReference type="NCBI Taxonomy" id="367110"/>
    <lineage>
        <taxon>Eukaryota</taxon>
        <taxon>Fungi</taxon>
        <taxon>Dikarya</taxon>
        <taxon>Ascomycota</taxon>
        <taxon>Pezizomycotina</taxon>
        <taxon>Sordariomycetes</taxon>
        <taxon>Sordariomycetidae</taxon>
        <taxon>Sordariales</taxon>
        <taxon>Sordariaceae</taxon>
        <taxon>Neurospora</taxon>
    </lineage>
</organism>
<dbReference type="EMBL" id="BX897678">
    <property type="protein sequence ID" value="CAE85596.1"/>
    <property type="status" value="ALT_SEQ"/>
    <property type="molecule type" value="Genomic_DNA"/>
</dbReference>
<dbReference type="EMBL" id="CM002241">
    <property type="protein sequence ID" value="EAA28414.2"/>
    <property type="molecule type" value="Genomic_DNA"/>
</dbReference>
<dbReference type="RefSeq" id="XP_957650.2">
    <property type="nucleotide sequence ID" value="XM_952557.3"/>
</dbReference>
<dbReference type="SMR" id="Q7RZI0"/>
<dbReference type="FunCoup" id="Q7RZI0">
    <property type="interactions" value="156"/>
</dbReference>
<dbReference type="STRING" id="367110.Q7RZI0"/>
<dbReference type="PaxDb" id="5141-EFNCRP00000003682"/>
<dbReference type="EnsemblFungi" id="EAA28414">
    <property type="protein sequence ID" value="EAA28414"/>
    <property type="gene ID" value="NCU04035"/>
</dbReference>
<dbReference type="GeneID" id="3873772"/>
<dbReference type="KEGG" id="ncr:NCU04035"/>
<dbReference type="VEuPathDB" id="FungiDB:NCU04035"/>
<dbReference type="HOGENOM" id="CLU_004372_3_1_1"/>
<dbReference type="InParanoid" id="Q7RZI0"/>
<dbReference type="OMA" id="RGSWDGD"/>
<dbReference type="OrthoDB" id="1741719at2759"/>
<dbReference type="Proteomes" id="UP000001805">
    <property type="component" value="Chromosome 5, Linkage Group VI"/>
</dbReference>
<dbReference type="GO" id="GO:0000785">
    <property type="term" value="C:chromatin"/>
    <property type="evidence" value="ECO:0000318"/>
    <property type="project" value="GO_Central"/>
</dbReference>
<dbReference type="GO" id="GO:0000417">
    <property type="term" value="C:HIR complex"/>
    <property type="evidence" value="ECO:0000318"/>
    <property type="project" value="GO_Central"/>
</dbReference>
<dbReference type="GO" id="GO:0005634">
    <property type="term" value="C:nucleus"/>
    <property type="evidence" value="ECO:0007669"/>
    <property type="project" value="UniProtKB-SubCell"/>
</dbReference>
<dbReference type="GO" id="GO:0006338">
    <property type="term" value="P:chromatin remodeling"/>
    <property type="evidence" value="ECO:0000318"/>
    <property type="project" value="GO_Central"/>
</dbReference>
<dbReference type="GO" id="GO:0006351">
    <property type="term" value="P:DNA-templated transcription"/>
    <property type="evidence" value="ECO:0007669"/>
    <property type="project" value="InterPro"/>
</dbReference>
<dbReference type="GO" id="GO:0006355">
    <property type="term" value="P:regulation of DNA-templated transcription"/>
    <property type="evidence" value="ECO:0007669"/>
    <property type="project" value="InterPro"/>
</dbReference>
<dbReference type="CDD" id="cd00200">
    <property type="entry name" value="WD40"/>
    <property type="match status" value="1"/>
</dbReference>
<dbReference type="FunFam" id="2.130.10.10:FF:000290">
    <property type="entry name" value="Protein HIR"/>
    <property type="match status" value="1"/>
</dbReference>
<dbReference type="FunFam" id="2.130.10.10:FF:001557">
    <property type="entry name" value="Protein HIR"/>
    <property type="match status" value="1"/>
</dbReference>
<dbReference type="Gene3D" id="2.130.10.10">
    <property type="entry name" value="YVTN repeat-like/Quinoprotein amine dehydrogenase"/>
    <property type="match status" value="2"/>
</dbReference>
<dbReference type="InterPro" id="IPR055410">
    <property type="entry name" value="CAF1B_HIR1_beta-prop"/>
</dbReference>
<dbReference type="InterPro" id="IPR031120">
    <property type="entry name" value="HIR1-like"/>
</dbReference>
<dbReference type="InterPro" id="IPR011494">
    <property type="entry name" value="HIRA-like_C"/>
</dbReference>
<dbReference type="InterPro" id="IPR019015">
    <property type="entry name" value="HIRA_B_motif"/>
</dbReference>
<dbReference type="InterPro" id="IPR015943">
    <property type="entry name" value="WD40/YVTN_repeat-like_dom_sf"/>
</dbReference>
<dbReference type="InterPro" id="IPR036322">
    <property type="entry name" value="WD40_repeat_dom_sf"/>
</dbReference>
<dbReference type="InterPro" id="IPR001680">
    <property type="entry name" value="WD40_rpt"/>
</dbReference>
<dbReference type="PANTHER" id="PTHR13831">
    <property type="entry name" value="MEMBER OF THE HIR1 FAMILY OF WD-REPEAT PROTEINS"/>
    <property type="match status" value="1"/>
</dbReference>
<dbReference type="PANTHER" id="PTHR13831:SF0">
    <property type="entry name" value="PROTEIN HIRA"/>
    <property type="match status" value="1"/>
</dbReference>
<dbReference type="Pfam" id="PF24105">
    <property type="entry name" value="Beta-prop_CAF1B_HIR1"/>
    <property type="match status" value="1"/>
</dbReference>
<dbReference type="Pfam" id="PF07569">
    <property type="entry name" value="Hira"/>
    <property type="match status" value="1"/>
</dbReference>
<dbReference type="Pfam" id="PF09453">
    <property type="entry name" value="HIRA_B"/>
    <property type="match status" value="1"/>
</dbReference>
<dbReference type="SMART" id="SM00320">
    <property type="entry name" value="WD40"/>
    <property type="match status" value="6"/>
</dbReference>
<dbReference type="SUPFAM" id="SSF50978">
    <property type="entry name" value="WD40 repeat-like"/>
    <property type="match status" value="1"/>
</dbReference>
<dbReference type="PROSITE" id="PS00678">
    <property type="entry name" value="WD_REPEATS_1"/>
    <property type="match status" value="1"/>
</dbReference>
<dbReference type="PROSITE" id="PS50082">
    <property type="entry name" value="WD_REPEATS_2"/>
    <property type="match status" value="4"/>
</dbReference>
<dbReference type="PROSITE" id="PS50294">
    <property type="entry name" value="WD_REPEATS_REGION"/>
    <property type="match status" value="2"/>
</dbReference>
<name>HIR1_NEUCR</name>
<feature type="chain" id="PRO_0000286414" description="Protein hir-1">
    <location>
        <begin position="1"/>
        <end position="1035"/>
    </location>
</feature>
<feature type="repeat" description="WD 1">
    <location>
        <begin position="15"/>
        <end position="54"/>
    </location>
</feature>
<feature type="repeat" description="WD 2">
    <location>
        <begin position="68"/>
        <end position="107"/>
    </location>
</feature>
<feature type="repeat" description="WD 3">
    <location>
        <begin position="129"/>
        <end position="168"/>
    </location>
</feature>
<feature type="repeat" description="WD 4">
    <location>
        <begin position="171"/>
        <end position="210"/>
    </location>
</feature>
<feature type="repeat" description="WD 5">
    <location>
        <begin position="232"/>
        <end position="275"/>
    </location>
</feature>
<feature type="repeat" description="WD 6">
    <location>
        <begin position="299"/>
        <end position="338"/>
    </location>
</feature>
<feature type="repeat" description="WD 7">
    <location>
        <begin position="342"/>
        <end position="383"/>
    </location>
</feature>
<feature type="region of interest" description="Disordered" evidence="2">
    <location>
        <begin position="393"/>
        <end position="479"/>
    </location>
</feature>
<feature type="compositionally biased region" description="Basic and acidic residues" evidence="2">
    <location>
        <begin position="408"/>
        <end position="425"/>
    </location>
</feature>
<accession>Q7RZI0</accession>
<reference key="1">
    <citation type="journal article" date="2003" name="Nucleic Acids Res.">
        <title>What's in the genome of a filamentous fungus? Analysis of the Neurospora genome sequence.</title>
        <authorList>
            <person name="Mannhaupt G."/>
            <person name="Montrone C."/>
            <person name="Haase D."/>
            <person name="Mewes H.-W."/>
            <person name="Aign V."/>
            <person name="Hoheisel J.D."/>
            <person name="Fartmann B."/>
            <person name="Nyakatura G."/>
            <person name="Kempken F."/>
            <person name="Maier J."/>
            <person name="Schulte U."/>
        </authorList>
    </citation>
    <scope>NUCLEOTIDE SEQUENCE [LARGE SCALE GENOMIC DNA]</scope>
    <source>
        <strain>ATCC 24698 / 74-OR23-1A / CBS 708.71 / DSM 1257 / FGSC 987</strain>
    </source>
</reference>
<reference key="2">
    <citation type="journal article" date="2003" name="Nature">
        <title>The genome sequence of the filamentous fungus Neurospora crassa.</title>
        <authorList>
            <person name="Galagan J.E."/>
            <person name="Calvo S.E."/>
            <person name="Borkovich K.A."/>
            <person name="Selker E.U."/>
            <person name="Read N.D."/>
            <person name="Jaffe D.B."/>
            <person name="FitzHugh W."/>
            <person name="Ma L.-J."/>
            <person name="Smirnov S."/>
            <person name="Purcell S."/>
            <person name="Rehman B."/>
            <person name="Elkins T."/>
            <person name="Engels R."/>
            <person name="Wang S."/>
            <person name="Nielsen C.B."/>
            <person name="Butler J."/>
            <person name="Endrizzi M."/>
            <person name="Qui D."/>
            <person name="Ianakiev P."/>
            <person name="Bell-Pedersen D."/>
            <person name="Nelson M.A."/>
            <person name="Werner-Washburne M."/>
            <person name="Selitrennikoff C.P."/>
            <person name="Kinsey J.A."/>
            <person name="Braun E.L."/>
            <person name="Zelter A."/>
            <person name="Schulte U."/>
            <person name="Kothe G.O."/>
            <person name="Jedd G."/>
            <person name="Mewes H.-W."/>
            <person name="Staben C."/>
            <person name="Marcotte E."/>
            <person name="Greenberg D."/>
            <person name="Roy A."/>
            <person name="Foley K."/>
            <person name="Naylor J."/>
            <person name="Stange-Thomann N."/>
            <person name="Barrett R."/>
            <person name="Gnerre S."/>
            <person name="Kamal M."/>
            <person name="Kamvysselis M."/>
            <person name="Mauceli E.W."/>
            <person name="Bielke C."/>
            <person name="Rudd S."/>
            <person name="Frishman D."/>
            <person name="Krystofova S."/>
            <person name="Rasmussen C."/>
            <person name="Metzenberg R.L."/>
            <person name="Perkins D.D."/>
            <person name="Kroken S."/>
            <person name="Cogoni C."/>
            <person name="Macino G."/>
            <person name="Catcheside D.E.A."/>
            <person name="Li W."/>
            <person name="Pratt R.J."/>
            <person name="Osmani S.A."/>
            <person name="DeSouza C.P.C."/>
            <person name="Glass N.L."/>
            <person name="Orbach M.J."/>
            <person name="Berglund J.A."/>
            <person name="Voelker R."/>
            <person name="Yarden O."/>
            <person name="Plamann M."/>
            <person name="Seiler S."/>
            <person name="Dunlap J.C."/>
            <person name="Radford A."/>
            <person name="Aramayo R."/>
            <person name="Natvig D.O."/>
            <person name="Alex L.A."/>
            <person name="Mannhaupt G."/>
            <person name="Ebbole D.J."/>
            <person name="Freitag M."/>
            <person name="Paulsen I."/>
            <person name="Sachs M.S."/>
            <person name="Lander E.S."/>
            <person name="Nusbaum C."/>
            <person name="Birren B.W."/>
        </authorList>
    </citation>
    <scope>NUCLEOTIDE SEQUENCE [LARGE SCALE GENOMIC DNA]</scope>
    <source>
        <strain>ATCC 24698 / 74-OR23-1A / CBS 708.71 / DSM 1257 / FGSC 987</strain>
    </source>
</reference>
<protein>
    <recommendedName>
        <fullName>Protein hir-1</fullName>
    </recommendedName>
</protein>
<gene>
    <name type="primary">hir-1</name>
    <name type="ORF">B10H18.120</name>
    <name type="ORF">NCU04035</name>
</gene>
<proteinExistence type="inferred from homology"/>
<evidence type="ECO:0000250" key="1"/>
<evidence type="ECO:0000256" key="2">
    <source>
        <dbReference type="SAM" id="MobiDB-lite"/>
    </source>
</evidence>
<evidence type="ECO:0000305" key="3"/>